<protein>
    <recommendedName>
        <fullName>Protein MGR2</fullName>
    </recommendedName>
    <alternativeName>
        <fullName>Mitochondrial genome-required protein 2</fullName>
    </alternativeName>
</protein>
<comment type="function">
    <text evidence="2">Required for cell viability in cells lacking mitochondrial DNA.</text>
</comment>
<comment type="subcellular location">
    <subcellularLocation>
        <location>Membrane</location>
        <topology>Multi-pass membrane protein</topology>
    </subcellularLocation>
</comment>
<comment type="similarity">
    <text evidence="3">Belongs to the MGR2 family.</text>
</comment>
<keyword id="KW-0472">Membrane</keyword>
<keyword id="KW-1185">Reference proteome</keyword>
<keyword id="KW-0812">Transmembrane</keyword>
<keyword id="KW-1133">Transmembrane helix</keyword>
<proteinExistence type="evidence at protein level"/>
<sequence>MPPLPQNYAQQQPSNWDKFKMGLMMGTTVGVCTGILFGGFAIATQGPGPDGVVRTLGKYIAGSAGTFGLFMSIGSIIRSDSESSPMSHPNLNLQQQARLEMWKLRAKYGIRKD</sequence>
<organism>
    <name type="scientific">Saccharomyces cerevisiae (strain ATCC 204508 / S288c)</name>
    <name type="common">Baker's yeast</name>
    <dbReference type="NCBI Taxonomy" id="559292"/>
    <lineage>
        <taxon>Eukaryota</taxon>
        <taxon>Fungi</taxon>
        <taxon>Dikarya</taxon>
        <taxon>Ascomycota</taxon>
        <taxon>Saccharomycotina</taxon>
        <taxon>Saccharomycetes</taxon>
        <taxon>Saccharomycetales</taxon>
        <taxon>Saccharomycetaceae</taxon>
        <taxon>Saccharomyces</taxon>
    </lineage>
</organism>
<name>MGR2_YEAST</name>
<reference key="1">
    <citation type="journal article" date="1997" name="Nature">
        <title>The nucleotide sequence of Saccharomyces cerevisiae chromosome XVI.</title>
        <authorList>
            <person name="Bussey H."/>
            <person name="Storms R.K."/>
            <person name="Ahmed A."/>
            <person name="Albermann K."/>
            <person name="Allen E."/>
            <person name="Ansorge W."/>
            <person name="Araujo R."/>
            <person name="Aparicio A."/>
            <person name="Barrell B.G."/>
            <person name="Badcock K."/>
            <person name="Benes V."/>
            <person name="Botstein D."/>
            <person name="Bowman S."/>
            <person name="Brueckner M."/>
            <person name="Carpenter J."/>
            <person name="Cherry J.M."/>
            <person name="Chung E."/>
            <person name="Churcher C.M."/>
            <person name="Coster F."/>
            <person name="Davis K."/>
            <person name="Davis R.W."/>
            <person name="Dietrich F.S."/>
            <person name="Delius H."/>
            <person name="DiPaolo T."/>
            <person name="Dubois E."/>
            <person name="Duesterhoeft A."/>
            <person name="Duncan M."/>
            <person name="Floeth M."/>
            <person name="Fortin N."/>
            <person name="Friesen J.D."/>
            <person name="Fritz C."/>
            <person name="Goffeau A."/>
            <person name="Hall J."/>
            <person name="Hebling U."/>
            <person name="Heumann K."/>
            <person name="Hilbert H."/>
            <person name="Hillier L.W."/>
            <person name="Hunicke-Smith S."/>
            <person name="Hyman R.W."/>
            <person name="Johnston M."/>
            <person name="Kalman S."/>
            <person name="Kleine K."/>
            <person name="Komp C."/>
            <person name="Kurdi O."/>
            <person name="Lashkari D."/>
            <person name="Lew H."/>
            <person name="Lin A."/>
            <person name="Lin D."/>
            <person name="Louis E.J."/>
            <person name="Marathe R."/>
            <person name="Messenguy F."/>
            <person name="Mewes H.-W."/>
            <person name="Mirtipati S."/>
            <person name="Moestl D."/>
            <person name="Mueller-Auer S."/>
            <person name="Namath A."/>
            <person name="Nentwich U."/>
            <person name="Oefner P."/>
            <person name="Pearson D."/>
            <person name="Petel F.X."/>
            <person name="Pohl T.M."/>
            <person name="Purnelle B."/>
            <person name="Rajandream M.A."/>
            <person name="Rechmann S."/>
            <person name="Rieger M."/>
            <person name="Riles L."/>
            <person name="Roberts D."/>
            <person name="Schaefer M."/>
            <person name="Scharfe M."/>
            <person name="Scherens B."/>
            <person name="Schramm S."/>
            <person name="Schroeder M."/>
            <person name="Sdicu A.-M."/>
            <person name="Tettelin H."/>
            <person name="Urrestarazu L.A."/>
            <person name="Ushinsky S."/>
            <person name="Vierendeels F."/>
            <person name="Vissers S."/>
            <person name="Voss H."/>
            <person name="Walsh S.V."/>
            <person name="Wambutt R."/>
            <person name="Wang Y."/>
            <person name="Wedler E."/>
            <person name="Wedler H."/>
            <person name="Winnett E."/>
            <person name="Zhong W.-W."/>
            <person name="Zollner A."/>
            <person name="Vo D.H."/>
            <person name="Hani J."/>
        </authorList>
    </citation>
    <scope>NUCLEOTIDE SEQUENCE [LARGE SCALE GENOMIC DNA]</scope>
    <source>
        <strain>ATCC 204508 / S288c</strain>
    </source>
</reference>
<reference key="2">
    <citation type="journal article" date="2014" name="G3 (Bethesda)">
        <title>The reference genome sequence of Saccharomyces cerevisiae: Then and now.</title>
        <authorList>
            <person name="Engel S.R."/>
            <person name="Dietrich F.S."/>
            <person name="Fisk D.G."/>
            <person name="Binkley G."/>
            <person name="Balakrishnan R."/>
            <person name="Costanzo M.C."/>
            <person name="Dwight S.S."/>
            <person name="Hitz B.C."/>
            <person name="Karra K."/>
            <person name="Nash R.S."/>
            <person name="Weng S."/>
            <person name="Wong E.D."/>
            <person name="Lloyd P."/>
            <person name="Skrzypek M.S."/>
            <person name="Miyasato S.R."/>
            <person name="Simison M."/>
            <person name="Cherry J.M."/>
        </authorList>
    </citation>
    <scope>GENOME REANNOTATION</scope>
    <source>
        <strain>ATCC 204508 / S288c</strain>
    </source>
</reference>
<reference key="3">
    <citation type="journal article" date="2007" name="Genome Res.">
        <title>Approaching a complete repository of sequence-verified protein-encoding clones for Saccharomyces cerevisiae.</title>
        <authorList>
            <person name="Hu Y."/>
            <person name="Rolfs A."/>
            <person name="Bhullar B."/>
            <person name="Murthy T.V.S."/>
            <person name="Zhu C."/>
            <person name="Berger M.F."/>
            <person name="Camargo A.A."/>
            <person name="Kelley F."/>
            <person name="McCarron S."/>
            <person name="Jepson D."/>
            <person name="Richardson A."/>
            <person name="Raphael J."/>
            <person name="Moreira D."/>
            <person name="Taycher E."/>
            <person name="Zuo D."/>
            <person name="Mohr S."/>
            <person name="Kane M.F."/>
            <person name="Williamson J."/>
            <person name="Simpson A.J.G."/>
            <person name="Bulyk M.L."/>
            <person name="Harlow E."/>
            <person name="Marsischky G."/>
            <person name="Kolodner R.D."/>
            <person name="LaBaer J."/>
        </authorList>
    </citation>
    <scope>NUCLEOTIDE SEQUENCE [GENOMIC DNA]</scope>
    <source>
        <strain>ATCC 204508 / S288c</strain>
    </source>
</reference>
<reference key="4">
    <citation type="journal article" date="2006" name="Mol. Biol. Cell">
        <title>A genomewide screen for petite-negative yeast strains yields a new subunit of the i-AAA protease complex.</title>
        <authorList>
            <person name="Dunn C.D."/>
            <person name="Lee M.S."/>
            <person name="Spencer F.A."/>
            <person name="Jensen R.E."/>
        </authorList>
    </citation>
    <scope>FUNCTION</scope>
</reference>
<reference key="5">
    <citation type="journal article" date="2006" name="Proc. Natl. Acad. Sci. U.S.A.">
        <title>A global topology map of the Saccharomyces cerevisiae membrane proteome.</title>
        <authorList>
            <person name="Kim H."/>
            <person name="Melen K."/>
            <person name="Oesterberg M."/>
            <person name="von Heijne G."/>
        </authorList>
    </citation>
    <scope>TOPOLOGY [LARGE SCALE ANALYSIS]</scope>
    <source>
        <strain>ATCC 208353 / W303-1A</strain>
    </source>
</reference>
<dbReference type="EMBL" id="U43281">
    <property type="protein sequence ID" value="AAB68201.1"/>
    <property type="molecule type" value="Genomic_DNA"/>
</dbReference>
<dbReference type="EMBL" id="AY558335">
    <property type="protein sequence ID" value="AAS56661.1"/>
    <property type="molecule type" value="Genomic_DNA"/>
</dbReference>
<dbReference type="EMBL" id="BK006949">
    <property type="protein sequence ID" value="DAA11334.1"/>
    <property type="molecule type" value="Genomic_DNA"/>
</dbReference>
<dbReference type="PIR" id="S61968">
    <property type="entry name" value="S61968"/>
</dbReference>
<dbReference type="RefSeq" id="NP_015227.1">
    <property type="nucleotide sequence ID" value="NM_001183912.1"/>
</dbReference>
<dbReference type="BioGRID" id="36082">
    <property type="interactions" value="271"/>
</dbReference>
<dbReference type="ComplexPortal" id="CPX-6127">
    <property type="entry name" value="TIM23 mitochondrial inner membrane pre-sequence translocase complex, sort variant"/>
</dbReference>
<dbReference type="DIP" id="DIP-4556N"/>
<dbReference type="FunCoup" id="Q02889">
    <property type="interactions" value="316"/>
</dbReference>
<dbReference type="IntAct" id="Q02889">
    <property type="interactions" value="1"/>
</dbReference>
<dbReference type="STRING" id="4932.YPL098C"/>
<dbReference type="TCDB" id="1.A.111.1.3">
    <property type="family name" value="the reactive oxygen species modulator 1 (romo1) family"/>
</dbReference>
<dbReference type="PaxDb" id="4932-YPL098C"/>
<dbReference type="PeptideAtlas" id="Q02889"/>
<dbReference type="EnsemblFungi" id="YPL098C_mRNA">
    <property type="protein sequence ID" value="YPL098C"/>
    <property type="gene ID" value="YPL098C"/>
</dbReference>
<dbReference type="GeneID" id="856006"/>
<dbReference type="KEGG" id="sce:YPL098C"/>
<dbReference type="AGR" id="SGD:S000006019"/>
<dbReference type="SGD" id="S000006019">
    <property type="gene designation" value="MGR2"/>
</dbReference>
<dbReference type="VEuPathDB" id="FungiDB:YPL098C"/>
<dbReference type="eggNOG" id="KOG4096">
    <property type="taxonomic scope" value="Eukaryota"/>
</dbReference>
<dbReference type="HOGENOM" id="CLU_142435_0_0_1"/>
<dbReference type="InParanoid" id="Q02889"/>
<dbReference type="OMA" id="SCWDRVK"/>
<dbReference type="OrthoDB" id="5409308at2759"/>
<dbReference type="BioCyc" id="YEAST:G3O-34001-MONOMER"/>
<dbReference type="BioGRID-ORCS" id="856006">
    <property type="hits" value="5 hits in 10 CRISPR screens"/>
</dbReference>
<dbReference type="PRO" id="PR:Q02889"/>
<dbReference type="Proteomes" id="UP000002311">
    <property type="component" value="Chromosome XVI"/>
</dbReference>
<dbReference type="RNAct" id="Q02889">
    <property type="molecule type" value="protein"/>
</dbReference>
<dbReference type="GO" id="GO:0005743">
    <property type="term" value="C:mitochondrial inner membrane"/>
    <property type="evidence" value="ECO:0000303"/>
    <property type="project" value="ComplexPortal"/>
</dbReference>
<dbReference type="GO" id="GO:0005739">
    <property type="term" value="C:mitochondrion"/>
    <property type="evidence" value="ECO:0007005"/>
    <property type="project" value="SGD"/>
</dbReference>
<dbReference type="GO" id="GO:0005744">
    <property type="term" value="C:TIM23 mitochondrial import inner membrane translocase complex"/>
    <property type="evidence" value="ECO:0000353"/>
    <property type="project" value="SGD"/>
</dbReference>
<dbReference type="GO" id="GO:0030150">
    <property type="term" value="P:protein import into mitochondrial matrix"/>
    <property type="evidence" value="ECO:0000315"/>
    <property type="project" value="SGD"/>
</dbReference>
<dbReference type="GO" id="GO:0045039">
    <property type="term" value="P:protein insertion into mitochondrial inner membrane"/>
    <property type="evidence" value="ECO:0000315"/>
    <property type="project" value="SGD"/>
</dbReference>
<dbReference type="InterPro" id="IPR018450">
    <property type="entry name" value="Romo1/Mgr2"/>
</dbReference>
<dbReference type="PANTHER" id="PTHR28525">
    <property type="entry name" value="REACTIVE OXYGEN SPECIES MODULATOR 1"/>
    <property type="match status" value="1"/>
</dbReference>
<dbReference type="PANTHER" id="PTHR28525:SF1">
    <property type="entry name" value="REACTIVE OXYGEN SPECIES MODULATOR 1"/>
    <property type="match status" value="1"/>
</dbReference>
<dbReference type="Pfam" id="PF10247">
    <property type="entry name" value="Romo1"/>
    <property type="match status" value="1"/>
</dbReference>
<dbReference type="SMART" id="SM01378">
    <property type="entry name" value="Romo1"/>
    <property type="match status" value="1"/>
</dbReference>
<evidence type="ECO:0000255" key="1"/>
<evidence type="ECO:0000269" key="2">
    <source>
    </source>
</evidence>
<evidence type="ECO:0000305" key="3"/>
<gene>
    <name type="primary">MGR2</name>
    <name type="ordered locus">YPL098C</name>
</gene>
<feature type="chain" id="PRO_0000252278" description="Protein MGR2">
    <location>
        <begin position="1"/>
        <end position="113"/>
    </location>
</feature>
<feature type="topological domain" description="Cytoplasmic" evidence="1">
    <location>
        <begin position="1"/>
        <end position="22"/>
    </location>
</feature>
<feature type="transmembrane region" description="Helical" evidence="1">
    <location>
        <begin position="23"/>
        <end position="43"/>
    </location>
</feature>
<feature type="topological domain" description="Extracellular" evidence="1">
    <location>
        <begin position="44"/>
        <end position="56"/>
    </location>
</feature>
<feature type="transmembrane region" description="Helical" evidence="1">
    <location>
        <begin position="57"/>
        <end position="77"/>
    </location>
</feature>
<feature type="topological domain" description="Cytoplasmic" evidence="1">
    <location>
        <begin position="78"/>
        <end position="113"/>
    </location>
</feature>
<accession>Q02889</accession>
<accession>D6W3R8</accession>